<name>PGES2_MOUSE</name>
<accession>Q8BWM0</accession>
<accession>A2ASQ2</accession>
<accession>Q99J30</accession>
<feature type="chain" id="PRO_0000013131" description="Prostaglandin E synthase 2">
    <location>
        <begin position="1"/>
        <end position="384"/>
    </location>
</feature>
<feature type="chain" id="PRO_0000013132" description="Prostaglandin E synthase 2 truncated form" evidence="1">
    <location>
        <begin position="87"/>
        <end position="384"/>
    </location>
</feature>
<feature type="topological domain" description="Lumenal" evidence="4">
    <location>
        <begin position="1"/>
        <end position="56"/>
    </location>
</feature>
<feature type="transmembrane region" description="Helical" evidence="4">
    <location>
        <begin position="57"/>
        <end position="73"/>
    </location>
</feature>
<feature type="topological domain" description="Cytoplasmic" evidence="4">
    <location>
        <begin position="74"/>
        <end position="384"/>
    </location>
</feature>
<feature type="domain" description="Glutaredoxin" evidence="5">
    <location>
        <begin position="89"/>
        <end position="192"/>
    </location>
</feature>
<feature type="domain" description="GST C-terminal">
    <location>
        <begin position="262"/>
        <end position="376"/>
    </location>
</feature>
<feature type="binding site" evidence="3">
    <location>
        <position position="147"/>
    </location>
    <ligand>
        <name>glutathione</name>
        <dbReference type="ChEBI" id="CHEBI:57925"/>
    </ligand>
</feature>
<feature type="binding site" evidence="3">
    <location>
        <begin position="163"/>
        <end position="164"/>
    </location>
    <ligand>
        <name>glutathione</name>
        <dbReference type="ChEBI" id="CHEBI:57925"/>
    </ligand>
</feature>
<feature type="site" description="Cleavage" evidence="1">
    <location>
        <begin position="86"/>
        <end position="87"/>
    </location>
</feature>
<feature type="sequence conflict" description="In Ref. 5; AAH04846." evidence="13" ref="5">
    <original>L</original>
    <variation>P</variation>
    <location>
        <position position="210"/>
    </location>
</feature>
<organism>
    <name type="scientific">Mus musculus</name>
    <name type="common">Mouse</name>
    <dbReference type="NCBI Taxonomy" id="10090"/>
    <lineage>
        <taxon>Eukaryota</taxon>
        <taxon>Metazoa</taxon>
        <taxon>Chordata</taxon>
        <taxon>Craniata</taxon>
        <taxon>Vertebrata</taxon>
        <taxon>Euteleostomi</taxon>
        <taxon>Mammalia</taxon>
        <taxon>Eutheria</taxon>
        <taxon>Euarchontoglires</taxon>
        <taxon>Glires</taxon>
        <taxon>Rodentia</taxon>
        <taxon>Myomorpha</taxon>
        <taxon>Muroidea</taxon>
        <taxon>Muridae</taxon>
        <taxon>Murinae</taxon>
        <taxon>Mus</taxon>
        <taxon>Mus</taxon>
    </lineage>
</organism>
<sequence>MAQAARLSWVLVSSRCALTEGLLTRPWQPLSAQSRAGFTRVAAGSRGAAVRKGSPRLLGAAALALGGALGLYHTVRWHQRSQDLRAERSAAQLPLSNSLQLTLYQYKTCPFCSKVRAFLDFHSLPYQVVEVNPVRRTEIKFSSYRKVPILVAQEGDSLQQLNDSSVIISALKTYLVSGQPLEEVITYYPPMKAMNDQGKEVTEFCNKYWLMLDEKEAQQMYGGKEARTEEMKWRQWADDWLVHLISPNVYRTPAEALASFDYIVREGKFGAVEAAMAKYVGAAAMYLISKRLKSRHHLQDDVRVDLYEAANKWVTAVGKDRPFMGGQKPNLADLAVYGVLRVMEGLEAFDDLMRHSHIQPWYLRMERAIEEAPSVHHVNPSCKD</sequence>
<dbReference type="EC" id="5.3.99.3" evidence="2"/>
<dbReference type="EMBL" id="AK050616">
    <property type="protein sequence ID" value="BAC34345.1"/>
    <property type="molecule type" value="mRNA"/>
</dbReference>
<dbReference type="EMBL" id="AL928669">
    <property type="status" value="NOT_ANNOTATED_CDS"/>
    <property type="molecule type" value="Genomic_DNA"/>
</dbReference>
<dbReference type="EMBL" id="CH466542">
    <property type="protein sequence ID" value="EDL08547.1"/>
    <property type="molecule type" value="Genomic_DNA"/>
</dbReference>
<dbReference type="EMBL" id="BC004846">
    <property type="protein sequence ID" value="AAH04846.1"/>
    <property type="molecule type" value="mRNA"/>
</dbReference>
<dbReference type="CCDS" id="CCDS15914.1"/>
<dbReference type="RefSeq" id="NP_598544.2">
    <property type="nucleotide sequence ID" value="NM_133783.2"/>
</dbReference>
<dbReference type="SMR" id="Q8BWM0"/>
<dbReference type="BioGRID" id="220557">
    <property type="interactions" value="3"/>
</dbReference>
<dbReference type="FunCoup" id="Q8BWM0">
    <property type="interactions" value="3193"/>
</dbReference>
<dbReference type="IntAct" id="Q8BWM0">
    <property type="interactions" value="2"/>
</dbReference>
<dbReference type="STRING" id="10090.ENSMUSP00000028162"/>
<dbReference type="ChEMBL" id="CHEMBL4879487"/>
<dbReference type="GlyGen" id="Q8BWM0">
    <property type="glycosylation" value="2 sites, 1 N-linked glycan (1 site), 1 O-linked glycan (1 site)"/>
</dbReference>
<dbReference type="iPTMnet" id="Q8BWM0"/>
<dbReference type="PhosphoSitePlus" id="Q8BWM0"/>
<dbReference type="SwissPalm" id="Q8BWM0"/>
<dbReference type="jPOST" id="Q8BWM0"/>
<dbReference type="PaxDb" id="10090-ENSMUSP00000028162"/>
<dbReference type="PeptideAtlas" id="Q8BWM0"/>
<dbReference type="ProteomicsDB" id="288182"/>
<dbReference type="Pumba" id="Q8BWM0"/>
<dbReference type="Antibodypedia" id="17330">
    <property type="antibodies" value="321 antibodies from 34 providers"/>
</dbReference>
<dbReference type="DNASU" id="96979"/>
<dbReference type="Ensembl" id="ENSMUST00000028162.5">
    <property type="protein sequence ID" value="ENSMUSP00000028162.4"/>
    <property type="gene ID" value="ENSMUSG00000026820.6"/>
</dbReference>
<dbReference type="GeneID" id="96979"/>
<dbReference type="KEGG" id="mmu:96979"/>
<dbReference type="UCSC" id="uc008jfm.2">
    <property type="organism name" value="mouse"/>
</dbReference>
<dbReference type="AGR" id="MGI:1917592"/>
<dbReference type="CTD" id="80142"/>
<dbReference type="MGI" id="MGI:1917592">
    <property type="gene designation" value="Ptges2"/>
</dbReference>
<dbReference type="VEuPathDB" id="HostDB:ENSMUSG00000026820"/>
<dbReference type="eggNOG" id="KOG3029">
    <property type="taxonomic scope" value="Eukaryota"/>
</dbReference>
<dbReference type="GeneTree" id="ENSGT00390000000224"/>
<dbReference type="HOGENOM" id="CLU_011226_0_0_1"/>
<dbReference type="InParanoid" id="Q8BWM0"/>
<dbReference type="OMA" id="DYCLTEG"/>
<dbReference type="OrthoDB" id="423541at2759"/>
<dbReference type="PhylomeDB" id="Q8BWM0"/>
<dbReference type="TreeFam" id="TF314304"/>
<dbReference type="Reactome" id="R-MMU-2162123">
    <property type="pathway name" value="Synthesis of Prostaglandins (PG) and Thromboxanes (TX)"/>
</dbReference>
<dbReference type="Reactome" id="R-MMU-6798695">
    <property type="pathway name" value="Neutrophil degranulation"/>
</dbReference>
<dbReference type="UniPathway" id="UPA00662"/>
<dbReference type="BioGRID-ORCS" id="96979">
    <property type="hits" value="2 hits in 81 CRISPR screens"/>
</dbReference>
<dbReference type="ChiTaRS" id="Ptges2">
    <property type="organism name" value="mouse"/>
</dbReference>
<dbReference type="PRO" id="PR:Q8BWM0"/>
<dbReference type="Proteomes" id="UP000000589">
    <property type="component" value="Chromosome 2"/>
</dbReference>
<dbReference type="RNAct" id="Q8BWM0">
    <property type="molecule type" value="protein"/>
</dbReference>
<dbReference type="Bgee" id="ENSMUSG00000026820">
    <property type="expression patterns" value="Expressed in right kidney and 259 other cell types or tissues"/>
</dbReference>
<dbReference type="ExpressionAtlas" id="Q8BWM0">
    <property type="expression patterns" value="baseline and differential"/>
</dbReference>
<dbReference type="GO" id="GO:0005829">
    <property type="term" value="C:cytosol"/>
    <property type="evidence" value="ECO:0000314"/>
    <property type="project" value="MGI"/>
</dbReference>
<dbReference type="GO" id="GO:0000139">
    <property type="term" value="C:Golgi membrane"/>
    <property type="evidence" value="ECO:0000250"/>
    <property type="project" value="UniProtKB"/>
</dbReference>
<dbReference type="GO" id="GO:0005739">
    <property type="term" value="C:mitochondrion"/>
    <property type="evidence" value="ECO:0007005"/>
    <property type="project" value="MGI"/>
</dbReference>
<dbReference type="GO" id="GO:0005634">
    <property type="term" value="C:nucleus"/>
    <property type="evidence" value="ECO:0000314"/>
    <property type="project" value="MGI"/>
</dbReference>
<dbReference type="GO" id="GO:0036134">
    <property type="term" value="F:12-hydroxyheptadecatrienoic acid synthase activity"/>
    <property type="evidence" value="ECO:0007669"/>
    <property type="project" value="RHEA"/>
</dbReference>
<dbReference type="GO" id="GO:0003677">
    <property type="term" value="F:DNA binding"/>
    <property type="evidence" value="ECO:0000314"/>
    <property type="project" value="MGI"/>
</dbReference>
<dbReference type="GO" id="GO:0043295">
    <property type="term" value="F:glutathione binding"/>
    <property type="evidence" value="ECO:0000250"/>
    <property type="project" value="UniProtKB"/>
</dbReference>
<dbReference type="GO" id="GO:0020037">
    <property type="term" value="F:heme binding"/>
    <property type="evidence" value="ECO:0000250"/>
    <property type="project" value="UniProtKB"/>
</dbReference>
<dbReference type="GO" id="GO:0016829">
    <property type="term" value="F:lyase activity"/>
    <property type="evidence" value="ECO:0000250"/>
    <property type="project" value="UniProtKB"/>
</dbReference>
<dbReference type="GO" id="GO:0050220">
    <property type="term" value="F:prostaglandin-E synthase activity"/>
    <property type="evidence" value="ECO:0007669"/>
    <property type="project" value="UniProtKB-EC"/>
</dbReference>
<dbReference type="GO" id="GO:0045893">
    <property type="term" value="P:positive regulation of DNA-templated transcription"/>
    <property type="evidence" value="ECO:0000314"/>
    <property type="project" value="MGI"/>
</dbReference>
<dbReference type="GO" id="GO:0001516">
    <property type="term" value="P:prostaglandin biosynthetic process"/>
    <property type="evidence" value="ECO:0007669"/>
    <property type="project" value="UniProtKB-UniPathway"/>
</dbReference>
<dbReference type="GO" id="GO:0046903">
    <property type="term" value="P:secretion"/>
    <property type="evidence" value="ECO:0000314"/>
    <property type="project" value="MGI"/>
</dbReference>
<dbReference type="CDD" id="cd03197">
    <property type="entry name" value="GST_C_mPGES2"/>
    <property type="match status" value="1"/>
</dbReference>
<dbReference type="CDD" id="cd03040">
    <property type="entry name" value="GST_N_mPGES2"/>
    <property type="match status" value="1"/>
</dbReference>
<dbReference type="FunFam" id="1.20.1050.10:FF:000028">
    <property type="entry name" value="Prostaglandin E synthase 2"/>
    <property type="match status" value="1"/>
</dbReference>
<dbReference type="FunFam" id="3.40.30.10:FF:000114">
    <property type="entry name" value="Prostaglandin E synthase 2"/>
    <property type="match status" value="1"/>
</dbReference>
<dbReference type="FunFam" id="6.20.200.30:FF:000001">
    <property type="entry name" value="Prostaglandin E synthase 2"/>
    <property type="match status" value="1"/>
</dbReference>
<dbReference type="Gene3D" id="1.20.1050.10">
    <property type="match status" value="1"/>
</dbReference>
<dbReference type="Gene3D" id="6.20.200.30">
    <property type="match status" value="1"/>
</dbReference>
<dbReference type="Gene3D" id="3.40.30.10">
    <property type="entry name" value="Glutaredoxin"/>
    <property type="match status" value="1"/>
</dbReference>
<dbReference type="InterPro" id="IPR036282">
    <property type="entry name" value="Glutathione-S-Trfase_C_sf"/>
</dbReference>
<dbReference type="InterPro" id="IPR004045">
    <property type="entry name" value="Glutathione_S-Trfase_N"/>
</dbReference>
<dbReference type="InterPro" id="IPR034334">
    <property type="entry name" value="PGES2"/>
</dbReference>
<dbReference type="InterPro" id="IPR034335">
    <property type="entry name" value="PGES2_C"/>
</dbReference>
<dbReference type="InterPro" id="IPR036249">
    <property type="entry name" value="Thioredoxin-like_sf"/>
</dbReference>
<dbReference type="PANTHER" id="PTHR12782">
    <property type="entry name" value="MICROSOMAL PROSTAGLANDIN E SYNTHASE-2"/>
    <property type="match status" value="1"/>
</dbReference>
<dbReference type="PANTHER" id="PTHR12782:SF5">
    <property type="entry name" value="PROSTAGLANDIN E SYNTHASE 2"/>
    <property type="match status" value="1"/>
</dbReference>
<dbReference type="Pfam" id="PF13417">
    <property type="entry name" value="GST_N_3"/>
    <property type="match status" value="1"/>
</dbReference>
<dbReference type="SFLD" id="SFLDG01182">
    <property type="entry name" value="Prostaglandin_E_synthase_like"/>
    <property type="match status" value="1"/>
</dbReference>
<dbReference type="SFLD" id="SFLDG01203">
    <property type="entry name" value="Prostaglandin_E_synthase_like1"/>
    <property type="match status" value="1"/>
</dbReference>
<dbReference type="SUPFAM" id="SSF47616">
    <property type="entry name" value="GST C-terminal domain-like"/>
    <property type="match status" value="1"/>
</dbReference>
<dbReference type="SUPFAM" id="SSF52833">
    <property type="entry name" value="Thioredoxin-like"/>
    <property type="match status" value="1"/>
</dbReference>
<dbReference type="PROSITE" id="PS00195">
    <property type="entry name" value="GLUTAREDOXIN_1"/>
    <property type="match status" value="1"/>
</dbReference>
<dbReference type="PROSITE" id="PS51354">
    <property type="entry name" value="GLUTAREDOXIN_2"/>
    <property type="match status" value="1"/>
</dbReference>
<proteinExistence type="evidence at protein level"/>
<evidence type="ECO:0000250" key="1">
    <source>
        <dbReference type="UniProtKB" id="Q66LN0"/>
    </source>
</evidence>
<evidence type="ECO:0000250" key="2">
    <source>
        <dbReference type="UniProtKB" id="Q9H7Z7"/>
    </source>
</evidence>
<evidence type="ECO:0000250" key="3">
    <source>
        <dbReference type="UniProtKB" id="Q9N0A4"/>
    </source>
</evidence>
<evidence type="ECO:0000255" key="4"/>
<evidence type="ECO:0000255" key="5">
    <source>
        <dbReference type="PROSITE-ProRule" id="PRU00686"/>
    </source>
</evidence>
<evidence type="ECO:0000269" key="6">
    <source>
    </source>
</evidence>
<evidence type="ECO:0000269" key="7">
    <source>
    </source>
</evidence>
<evidence type="ECO:0000269" key="8">
    <source>
    </source>
</evidence>
<evidence type="ECO:0000269" key="9">
    <source>
    </source>
</evidence>
<evidence type="ECO:0000269" key="10">
    <source>
    </source>
</evidence>
<evidence type="ECO:0000269" key="11">
    <source>
    </source>
</evidence>
<evidence type="ECO:0000303" key="12">
    <source>
    </source>
</evidence>
<evidence type="ECO:0000305" key="13"/>
<gene>
    <name type="primary">Ptges2</name>
    <name type="synonym">Gbf1</name>
    <name type="synonym">Pges2</name>
</gene>
<protein>
    <recommendedName>
        <fullName>Prostaglandin E synthase 2</fullName>
        <ecNumber evidence="2">5.3.99.3</ecNumber>
    </recommendedName>
    <alternativeName>
        <fullName evidence="12">GATE-binding factor 1</fullName>
        <shortName evidence="12">GBF-1</shortName>
    </alternativeName>
    <alternativeName>
        <fullName>Microsomal prostaglandin E synthase 2</fullName>
        <shortName>mPGES-2</shortName>
    </alternativeName>
    <component>
        <recommendedName>
            <fullName>Prostaglandin E synthase 2 truncated form</fullName>
        </recommendedName>
    </component>
</protein>
<comment type="function">
    <text evidence="2 3 12">Isomerase that catalyzes the conversion of PGH2 into the more stable prostaglandin E2 (PGE2) (in vitro). The biological function and the GSH-dependent property of PTGES2 is still under debate (By similarity). In vivo, PTGES2 could form a complex with GSH and heme and would not participate in PGE2 synthesis but would catalyze the degradation of prostaglandin E2 H2 (PGH2) to 12(S)-hydroxy-5(Z),8(E),10(E)-heptadecatrienoic acid (HHT) and malondialdehyde (MDA) (By similarity). May also have transactivation activity toward IFN-gamma (IFNG), possibly via an interaction with CEBPB; however, the relevance of transcription activation activity remains unclear (PubMed:12050152).</text>
</comment>
<comment type="catalytic activity">
    <reaction evidence="2">
        <text>prostaglandin H2 = prostaglandin E2</text>
        <dbReference type="Rhea" id="RHEA:12893"/>
        <dbReference type="ChEBI" id="CHEBI:57405"/>
        <dbReference type="ChEBI" id="CHEBI:606564"/>
        <dbReference type="EC" id="5.3.99.3"/>
    </reaction>
    <physiologicalReaction direction="left-to-right" evidence="2">
        <dbReference type="Rhea" id="RHEA:12894"/>
    </physiologicalReaction>
</comment>
<comment type="catalytic activity">
    <reaction evidence="2">
        <text>prostaglandin H2 = (12S)-hydroxy-(5Z,8E,10E)-heptadecatrienoate + malonaldehyde</text>
        <dbReference type="Rhea" id="RHEA:48644"/>
        <dbReference type="ChEBI" id="CHEBI:57405"/>
        <dbReference type="ChEBI" id="CHEBI:90694"/>
        <dbReference type="ChEBI" id="CHEBI:566274"/>
    </reaction>
    <physiologicalReaction direction="left-to-right" evidence="2">
        <dbReference type="Rhea" id="RHEA:48645"/>
    </physiologicalReaction>
</comment>
<comment type="activity regulation">
    <text evidence="1">Isomerase activity is increased by sulfhydril compounds. Dithiothreitol (DTT) is most effective, followed by glutathione (GSH) and 2-mercaptoethanol.</text>
</comment>
<comment type="pathway">
    <text>Lipid metabolism; prostaglandin biosynthesis.</text>
</comment>
<comment type="subunit">
    <text evidence="1 2 9">Homodimer. Interacts with EXOSC10 (By similarity). May interact with CEBPB.</text>
</comment>
<comment type="subcellular location">
    <subcellularLocation>
        <location evidence="2">Golgi apparatus membrane</location>
        <topology evidence="2">Single-pass membrane protein</topology>
    </subcellularLocation>
    <subcellularLocation>
        <location evidence="6">Nucleus</location>
    </subcellularLocation>
    <text evidence="6">According to PubMed:12050152, some fraction may be nuclear.</text>
</comment>
<comment type="subcellular location">
    <molecule>Prostaglandin E synthase 2 truncated form</molecule>
    <subcellularLocation>
        <location evidence="2">Cytoplasm</location>
    </subcellularLocation>
    <text evidence="2">Synthesized as a Golgi membrane-bound protein, which is further cleaved into the predominant soluble truncated form.</text>
</comment>
<comment type="tissue specificity">
    <text evidence="6 7 10">Widely expressed. Expressed in brain, heart, liver, colon and lung.</text>
</comment>
<comment type="induction">
    <text evidence="7 8">Constitutively expressed. Not induced during tissue inflammation. Down-regulated in the absence of PTGES.</text>
</comment>
<comment type="PTM">
    <text evidence="2">Synthesized as a Golgi membrane-associated protein, and the proteolytic removal of the N-terminal hydrophobic domain leads to the formation of a mature cytosolic enzyme.</text>
</comment>
<comment type="disruption phenotype">
    <text evidence="10 11">Deficient mice displays no obvious phenotype and are fertile. Loss of PTGES2 expression does not result in a measurable decrease in PGE2 levels in any tissue or cell type examined from healthy mice (PubMed:19010439). Injection of the diabetogenic agent streptozotocin (STZ) at a dose to induce type-1 diabetes to knockout (KO) mice aggravates STZ-induced liver toxicity associated with high lethality, despite similar glucose levels (PubMed:25076362).</text>
</comment>
<comment type="similarity">
    <text evidence="13">Belongs to the GST superfamily.</text>
</comment>
<comment type="caution">
    <text evidence="2 3 10 13">It is not known if heme and GST are required for prostaglandin synthase activity. The protein copurifies with heme and GST when DTT is omitted during the purification procedure. The GSH-heme complex-bound enzyme has been proposed to act as a lyase and catalyze the degradation of prostaglandin E2 H2 (PGH2) to 12(S)-hydroxy-5(Z),8(E),10(E)-heptadecatrienoic acid (HHT) and malondialdehyde (MDA). Boiling the enzyme leads to loss of prostaglandin synthase activity, but does not eliminate the lyase activity. Besides, free heme can catalyze the formation of 12L-hydroxy-5,8,10-heptadecatrienoic acid (HHT) (By similarity). A more recent study demonstrates the GSH-dependent property of PTGES2, DTT dissociates the bound heme to produce active PGE2 synthase in vitro (By similarity). PTGES2 can only catalyzes PGE2 synthesis in the free state as an enzyme, while in vivo it forms a complex with heme and does not participate in PGE2 synthesis (By similarity). In agreement with this study, the in vivo evidence from PTGES2 deficient mice do not show that this protein is responsible for the PGE2 production under basal or pathophysiological conditions (PubMed:19010439).</text>
</comment>
<reference key="1">
    <citation type="journal article" date="2002" name="J. Biol. Chem.">
        <title>A novel transactivating factor that regulates interferon-gamma-dependent gene expression.</title>
        <authorList>
            <person name="Hu J."/>
            <person name="Meng Q."/>
            <person name="Roy S.K."/>
            <person name="Raha A."/>
            <person name="Hu J."/>
            <person name="Zhang J."/>
            <person name="Hashimoto K."/>
            <person name="Kalvakolanu D.V."/>
        </authorList>
    </citation>
    <scope>NUCLEOTIDE SEQUENCE [MRNA]</scope>
    <scope>POSSIBLE FUNCTION</scope>
    <scope>POSSIBLE SUBCELLULAR LOCATION</scope>
    <scope>TISSUE SPECIFICITY</scope>
    <source>
        <tissue>Kidney</tissue>
    </source>
</reference>
<reference key="2">
    <citation type="journal article" date="2005" name="Science">
        <title>The transcriptional landscape of the mammalian genome.</title>
        <authorList>
            <person name="Carninci P."/>
            <person name="Kasukawa T."/>
            <person name="Katayama S."/>
            <person name="Gough J."/>
            <person name="Frith M.C."/>
            <person name="Maeda N."/>
            <person name="Oyama R."/>
            <person name="Ravasi T."/>
            <person name="Lenhard B."/>
            <person name="Wells C."/>
            <person name="Kodzius R."/>
            <person name="Shimokawa K."/>
            <person name="Bajic V.B."/>
            <person name="Brenner S.E."/>
            <person name="Batalov S."/>
            <person name="Forrest A.R."/>
            <person name="Zavolan M."/>
            <person name="Davis M.J."/>
            <person name="Wilming L.G."/>
            <person name="Aidinis V."/>
            <person name="Allen J.E."/>
            <person name="Ambesi-Impiombato A."/>
            <person name="Apweiler R."/>
            <person name="Aturaliya R.N."/>
            <person name="Bailey T.L."/>
            <person name="Bansal M."/>
            <person name="Baxter L."/>
            <person name="Beisel K.W."/>
            <person name="Bersano T."/>
            <person name="Bono H."/>
            <person name="Chalk A.M."/>
            <person name="Chiu K.P."/>
            <person name="Choudhary V."/>
            <person name="Christoffels A."/>
            <person name="Clutterbuck D.R."/>
            <person name="Crowe M.L."/>
            <person name="Dalla E."/>
            <person name="Dalrymple B.P."/>
            <person name="de Bono B."/>
            <person name="Della Gatta G."/>
            <person name="di Bernardo D."/>
            <person name="Down T."/>
            <person name="Engstrom P."/>
            <person name="Fagiolini M."/>
            <person name="Faulkner G."/>
            <person name="Fletcher C.F."/>
            <person name="Fukushima T."/>
            <person name="Furuno M."/>
            <person name="Futaki S."/>
            <person name="Gariboldi M."/>
            <person name="Georgii-Hemming P."/>
            <person name="Gingeras T.R."/>
            <person name="Gojobori T."/>
            <person name="Green R.E."/>
            <person name="Gustincich S."/>
            <person name="Harbers M."/>
            <person name="Hayashi Y."/>
            <person name="Hensch T.K."/>
            <person name="Hirokawa N."/>
            <person name="Hill D."/>
            <person name="Huminiecki L."/>
            <person name="Iacono M."/>
            <person name="Ikeo K."/>
            <person name="Iwama A."/>
            <person name="Ishikawa T."/>
            <person name="Jakt M."/>
            <person name="Kanapin A."/>
            <person name="Katoh M."/>
            <person name="Kawasawa Y."/>
            <person name="Kelso J."/>
            <person name="Kitamura H."/>
            <person name="Kitano H."/>
            <person name="Kollias G."/>
            <person name="Krishnan S.P."/>
            <person name="Kruger A."/>
            <person name="Kummerfeld S.K."/>
            <person name="Kurochkin I.V."/>
            <person name="Lareau L.F."/>
            <person name="Lazarevic D."/>
            <person name="Lipovich L."/>
            <person name="Liu J."/>
            <person name="Liuni S."/>
            <person name="McWilliam S."/>
            <person name="Madan Babu M."/>
            <person name="Madera M."/>
            <person name="Marchionni L."/>
            <person name="Matsuda H."/>
            <person name="Matsuzawa S."/>
            <person name="Miki H."/>
            <person name="Mignone F."/>
            <person name="Miyake S."/>
            <person name="Morris K."/>
            <person name="Mottagui-Tabar S."/>
            <person name="Mulder N."/>
            <person name="Nakano N."/>
            <person name="Nakauchi H."/>
            <person name="Ng P."/>
            <person name="Nilsson R."/>
            <person name="Nishiguchi S."/>
            <person name="Nishikawa S."/>
            <person name="Nori F."/>
            <person name="Ohara O."/>
            <person name="Okazaki Y."/>
            <person name="Orlando V."/>
            <person name="Pang K.C."/>
            <person name="Pavan W.J."/>
            <person name="Pavesi G."/>
            <person name="Pesole G."/>
            <person name="Petrovsky N."/>
            <person name="Piazza S."/>
            <person name="Reed J."/>
            <person name="Reid J.F."/>
            <person name="Ring B.Z."/>
            <person name="Ringwald M."/>
            <person name="Rost B."/>
            <person name="Ruan Y."/>
            <person name="Salzberg S.L."/>
            <person name="Sandelin A."/>
            <person name="Schneider C."/>
            <person name="Schoenbach C."/>
            <person name="Sekiguchi K."/>
            <person name="Semple C.A."/>
            <person name="Seno S."/>
            <person name="Sessa L."/>
            <person name="Sheng Y."/>
            <person name="Shibata Y."/>
            <person name="Shimada H."/>
            <person name="Shimada K."/>
            <person name="Silva D."/>
            <person name="Sinclair B."/>
            <person name="Sperling S."/>
            <person name="Stupka E."/>
            <person name="Sugiura K."/>
            <person name="Sultana R."/>
            <person name="Takenaka Y."/>
            <person name="Taki K."/>
            <person name="Tammoja K."/>
            <person name="Tan S.L."/>
            <person name="Tang S."/>
            <person name="Taylor M.S."/>
            <person name="Tegner J."/>
            <person name="Teichmann S.A."/>
            <person name="Ueda H.R."/>
            <person name="van Nimwegen E."/>
            <person name="Verardo R."/>
            <person name="Wei C.L."/>
            <person name="Yagi K."/>
            <person name="Yamanishi H."/>
            <person name="Zabarovsky E."/>
            <person name="Zhu S."/>
            <person name="Zimmer A."/>
            <person name="Hide W."/>
            <person name="Bult C."/>
            <person name="Grimmond S.M."/>
            <person name="Teasdale R.D."/>
            <person name="Liu E.T."/>
            <person name="Brusic V."/>
            <person name="Quackenbush J."/>
            <person name="Wahlestedt C."/>
            <person name="Mattick J.S."/>
            <person name="Hume D.A."/>
            <person name="Kai C."/>
            <person name="Sasaki D."/>
            <person name="Tomaru Y."/>
            <person name="Fukuda S."/>
            <person name="Kanamori-Katayama M."/>
            <person name="Suzuki M."/>
            <person name="Aoki J."/>
            <person name="Arakawa T."/>
            <person name="Iida J."/>
            <person name="Imamura K."/>
            <person name="Itoh M."/>
            <person name="Kato T."/>
            <person name="Kawaji H."/>
            <person name="Kawagashira N."/>
            <person name="Kawashima T."/>
            <person name="Kojima M."/>
            <person name="Kondo S."/>
            <person name="Konno H."/>
            <person name="Nakano K."/>
            <person name="Ninomiya N."/>
            <person name="Nishio T."/>
            <person name="Okada M."/>
            <person name="Plessy C."/>
            <person name="Shibata K."/>
            <person name="Shiraki T."/>
            <person name="Suzuki S."/>
            <person name="Tagami M."/>
            <person name="Waki K."/>
            <person name="Watahiki A."/>
            <person name="Okamura-Oho Y."/>
            <person name="Suzuki H."/>
            <person name="Kawai J."/>
            <person name="Hayashizaki Y."/>
        </authorList>
    </citation>
    <scope>NUCLEOTIDE SEQUENCE [LARGE SCALE MRNA]</scope>
    <source>
        <strain>C57BL/6J</strain>
        <tissue>Thymus</tissue>
    </source>
</reference>
<reference key="3">
    <citation type="journal article" date="2009" name="PLoS Biol.">
        <title>Lineage-specific biology revealed by a finished genome assembly of the mouse.</title>
        <authorList>
            <person name="Church D.M."/>
            <person name="Goodstadt L."/>
            <person name="Hillier L.W."/>
            <person name="Zody M.C."/>
            <person name="Goldstein S."/>
            <person name="She X."/>
            <person name="Bult C.J."/>
            <person name="Agarwala R."/>
            <person name="Cherry J.L."/>
            <person name="DiCuccio M."/>
            <person name="Hlavina W."/>
            <person name="Kapustin Y."/>
            <person name="Meric P."/>
            <person name="Maglott D."/>
            <person name="Birtle Z."/>
            <person name="Marques A.C."/>
            <person name="Graves T."/>
            <person name="Zhou S."/>
            <person name="Teague B."/>
            <person name="Potamousis K."/>
            <person name="Churas C."/>
            <person name="Place M."/>
            <person name="Herschleb J."/>
            <person name="Runnheim R."/>
            <person name="Forrest D."/>
            <person name="Amos-Landgraf J."/>
            <person name="Schwartz D.C."/>
            <person name="Cheng Z."/>
            <person name="Lindblad-Toh K."/>
            <person name="Eichler E.E."/>
            <person name="Ponting C.P."/>
        </authorList>
    </citation>
    <scope>NUCLEOTIDE SEQUENCE [LARGE SCALE GENOMIC DNA]</scope>
    <source>
        <strain>C57BL/6J</strain>
    </source>
</reference>
<reference key="4">
    <citation type="submission" date="2005-07" db="EMBL/GenBank/DDBJ databases">
        <authorList>
            <person name="Mural R.J."/>
            <person name="Adams M.D."/>
            <person name="Myers E.W."/>
            <person name="Smith H.O."/>
            <person name="Venter J.C."/>
        </authorList>
    </citation>
    <scope>NUCLEOTIDE SEQUENCE [LARGE SCALE GENOMIC DNA]</scope>
</reference>
<reference key="5">
    <citation type="journal article" date="2004" name="Genome Res.">
        <title>The status, quality, and expansion of the NIH full-length cDNA project: the Mammalian Gene Collection (MGC).</title>
        <authorList>
            <consortium name="The MGC Project Team"/>
        </authorList>
    </citation>
    <scope>NUCLEOTIDE SEQUENCE [LARGE SCALE MRNA]</scope>
    <source>
        <strain>129</strain>
        <tissue>Mammary tumor</tissue>
    </source>
</reference>
<reference key="6">
    <citation type="journal article" date="2003" name="J. Biol. Chem.">
        <title>Cellular prostaglandin E2 production by membrane-bound prostaglandin E synthase-2 via both cyclooxygenases-1 and -2.</title>
        <authorList>
            <person name="Murakami M."/>
            <person name="Nakashima K."/>
            <person name="Kamei D."/>
            <person name="Masuda S."/>
            <person name="Ishikawa Y."/>
            <person name="Ishii T."/>
            <person name="Ohmiya Y."/>
            <person name="Watanabe K."/>
            <person name="Kudo I."/>
        </authorList>
    </citation>
    <scope>TISSUE SPECIFICITY</scope>
    <scope>INDUCTION</scope>
</reference>
<reference key="7">
    <citation type="journal article" date="2004" name="J. Neurochem.">
        <title>Prostaglandin E2 and microsomal prostaglandin E synthase-2 expression are decreased in the cyclooxygenase-2-deficient mouse brain despite compensatory induction of cyclooxygenase-1 and Ca2+-dependent phospholipase A2.</title>
        <authorList>
            <person name="Bosetti F."/>
            <person name="Langenbach R."/>
            <person name="Weerasinghe G.R."/>
        </authorList>
    </citation>
    <scope>INDUCTION</scope>
</reference>
<reference key="8">
    <citation type="journal article" date="2005" name="J. Immunol.">
        <title>IFN-gamma-stimulated transcriptional activation by IFN-gamma-activated transcriptional element-binding factor 1 occurs via an inducible interaction with CAAAT/enhancer-binding protein-beta.</title>
        <authorList>
            <person name="Meng Q."/>
            <person name="Raha A."/>
            <person name="Roy S."/>
            <person name="Hu J."/>
            <person name="Kalvakolanu D.V."/>
        </authorList>
    </citation>
    <scope>INTERACTION WITH CEBPB</scope>
</reference>
<reference key="9">
    <citation type="journal article" date="2009" name="Prostaglandins Other Lipid Mediat.">
        <title>Microsomal prostaglandin E synthase-2 is not essential for in vivo prostaglandin E2 biosynthesis.</title>
        <authorList>
            <person name="Jania L.A."/>
            <person name="Chandrasekharan S."/>
            <person name="Backlund M.G."/>
            <person name="Foley N.A."/>
            <person name="Snouwaert J."/>
            <person name="Wang I.M."/>
            <person name="Clark P."/>
            <person name="Audoly L.P."/>
            <person name="Koller B.H."/>
        </authorList>
    </citation>
    <scope>DISRUPTION PHENOTYPE</scope>
    <scope>TISSUE SPECIFICITY</scope>
</reference>
<reference key="10">
    <citation type="journal article" date="2010" name="Cell">
        <title>A tissue-specific atlas of mouse protein phosphorylation and expression.</title>
        <authorList>
            <person name="Huttlin E.L."/>
            <person name="Jedrychowski M.P."/>
            <person name="Elias J.E."/>
            <person name="Goswami T."/>
            <person name="Rad R."/>
            <person name="Beausoleil S.A."/>
            <person name="Villen J."/>
            <person name="Haas W."/>
            <person name="Sowa M.E."/>
            <person name="Gygi S.P."/>
        </authorList>
    </citation>
    <scope>IDENTIFICATION BY MASS SPECTROMETRY [LARGE SCALE ANALYSIS]</scope>
    <source>
        <tissue>Brain</tissue>
        <tissue>Brown adipose tissue</tissue>
        <tissue>Heart</tissue>
        <tissue>Kidney</tissue>
        <tissue>Liver</tissue>
        <tissue>Lung</tissue>
        <tissue>Pancreas</tissue>
        <tissue>Spleen</tissue>
        <tissue>Testis</tissue>
    </source>
</reference>
<reference key="11">
    <citation type="journal article" date="2014" name="J. Hepatol.">
        <title>mPGES-2 deletion remarkably enhances liver injury in streptozotocin-treated mice via induction of GLUT2.</title>
        <authorList>
            <person name="Sun Y."/>
            <person name="Jia Z."/>
            <person name="Yang G."/>
            <person name="Kakizoe Y."/>
            <person name="Liu M."/>
            <person name="Yang K.T."/>
            <person name="Liu Y."/>
            <person name="Yang B."/>
            <person name="Yang T."/>
        </authorList>
    </citation>
    <scope>DISRUPTION PHENOTYPE</scope>
    <scope>FUNCTION</scope>
</reference>
<keyword id="KW-0963">Cytoplasm</keyword>
<keyword id="KW-0275">Fatty acid biosynthesis</keyword>
<keyword id="KW-0276">Fatty acid metabolism</keyword>
<keyword id="KW-0333">Golgi apparatus</keyword>
<keyword id="KW-0413">Isomerase</keyword>
<keyword id="KW-0444">Lipid biosynthesis</keyword>
<keyword id="KW-0443">Lipid metabolism</keyword>
<keyword id="KW-0472">Membrane</keyword>
<keyword id="KW-0539">Nucleus</keyword>
<keyword id="KW-0643">Prostaglandin biosynthesis</keyword>
<keyword id="KW-0644">Prostaglandin metabolism</keyword>
<keyword id="KW-1185">Reference proteome</keyword>
<keyword id="KW-0812">Transmembrane</keyword>
<keyword id="KW-1133">Transmembrane helix</keyword>